<feature type="chain" id="PRO_0000179273" description="UDP-N-acetylenolpyruvoylglucosamine reductase">
    <location>
        <begin position="1"/>
        <end position="295"/>
    </location>
</feature>
<feature type="domain" description="FAD-binding PCMH-type" evidence="1">
    <location>
        <begin position="23"/>
        <end position="188"/>
    </location>
</feature>
<feature type="active site" evidence="1">
    <location>
        <position position="167"/>
    </location>
</feature>
<feature type="active site" description="Proton donor" evidence="1">
    <location>
        <position position="217"/>
    </location>
</feature>
<feature type="active site" evidence="1">
    <location>
        <position position="287"/>
    </location>
</feature>
<protein>
    <recommendedName>
        <fullName evidence="1">UDP-N-acetylenolpyruvoylglucosamine reductase</fullName>
        <ecNumber evidence="1">1.3.1.98</ecNumber>
    </recommendedName>
    <alternativeName>
        <fullName evidence="1">UDP-N-acetylmuramate dehydrogenase</fullName>
    </alternativeName>
</protein>
<reference key="1">
    <citation type="journal article" date="2002" name="Proc. Natl. Acad. Sci. U.S.A.">
        <title>Genome sequence of a serotype M3 strain of group A Streptococcus: phage-encoded toxins, the high-virulence phenotype, and clone emergence.</title>
        <authorList>
            <person name="Beres S.B."/>
            <person name="Sylva G.L."/>
            <person name="Barbian K.D."/>
            <person name="Lei B."/>
            <person name="Hoff J.S."/>
            <person name="Mammarella N.D."/>
            <person name="Liu M.-Y."/>
            <person name="Smoot J.C."/>
            <person name="Porcella S.F."/>
            <person name="Parkins L.D."/>
            <person name="Campbell D.S."/>
            <person name="Smith T.M."/>
            <person name="McCormick J.K."/>
            <person name="Leung D.Y.M."/>
            <person name="Schlievert P.M."/>
            <person name="Musser J.M."/>
        </authorList>
    </citation>
    <scope>NUCLEOTIDE SEQUENCE [LARGE SCALE GENOMIC DNA]</scope>
    <source>
        <strain>ATCC BAA-595 / MGAS315</strain>
    </source>
</reference>
<name>MURB_STRP3</name>
<evidence type="ECO:0000255" key="1">
    <source>
        <dbReference type="HAMAP-Rule" id="MF_00037"/>
    </source>
</evidence>
<comment type="function">
    <text evidence="1">Cell wall formation.</text>
</comment>
<comment type="catalytic activity">
    <reaction evidence="1">
        <text>UDP-N-acetyl-alpha-D-muramate + NADP(+) = UDP-N-acetyl-3-O-(1-carboxyvinyl)-alpha-D-glucosamine + NADPH + H(+)</text>
        <dbReference type="Rhea" id="RHEA:12248"/>
        <dbReference type="ChEBI" id="CHEBI:15378"/>
        <dbReference type="ChEBI" id="CHEBI:57783"/>
        <dbReference type="ChEBI" id="CHEBI:58349"/>
        <dbReference type="ChEBI" id="CHEBI:68483"/>
        <dbReference type="ChEBI" id="CHEBI:70757"/>
        <dbReference type="EC" id="1.3.1.98"/>
    </reaction>
</comment>
<comment type="cofactor">
    <cofactor evidence="1">
        <name>FAD</name>
        <dbReference type="ChEBI" id="CHEBI:57692"/>
    </cofactor>
</comment>
<comment type="pathway">
    <text evidence="1">Cell wall biogenesis; peptidoglycan biosynthesis.</text>
</comment>
<comment type="subcellular location">
    <subcellularLocation>
        <location evidence="1">Cytoplasm</location>
    </subcellularLocation>
</comment>
<comment type="similarity">
    <text evidence="1">Belongs to the MurB family.</text>
</comment>
<sequence>MITELHGIDIRENEPLKHYTYTKVGGPADFLAFPRNHYELSRIVVYANKENMPWLVLGNASNLIVRDGGIRGFVIMFDKLNAVHLNGYTLEAEAGANLIETTKIAKFHSLTGFEFACGIPGSIGGAVFMNAGAYGGEISHIFLSAKVLTSSGEIKTISARDMAFGYRHSAIQETGDIVISAKFALKPGNYDTISQEMNRLNHLRQLKQPLEFPSCGSVFKRPPGHFAGQLIMEANLKGHRIGGVEVSEKHAGFMINVADGTAKDYEDLIAYVIETVENHSGVRLEPEVRIIGENL</sequence>
<accession>P0DC48</accession>
<accession>Q8K7K5</accession>
<gene>
    <name evidence="1" type="primary">murB</name>
    <name type="ordered locus">SpyM3_0763</name>
</gene>
<keyword id="KW-0131">Cell cycle</keyword>
<keyword id="KW-0132">Cell division</keyword>
<keyword id="KW-0133">Cell shape</keyword>
<keyword id="KW-0961">Cell wall biogenesis/degradation</keyword>
<keyword id="KW-0963">Cytoplasm</keyword>
<keyword id="KW-0274">FAD</keyword>
<keyword id="KW-0285">Flavoprotein</keyword>
<keyword id="KW-0521">NADP</keyword>
<keyword id="KW-0560">Oxidoreductase</keyword>
<keyword id="KW-0573">Peptidoglycan synthesis</keyword>
<dbReference type="EC" id="1.3.1.98" evidence="1"/>
<dbReference type="EMBL" id="AE014074">
    <property type="protein sequence ID" value="AAM79370.1"/>
    <property type="molecule type" value="Genomic_DNA"/>
</dbReference>
<dbReference type="RefSeq" id="WP_011054471.1">
    <property type="nucleotide sequence ID" value="NC_004070.1"/>
</dbReference>
<dbReference type="SMR" id="P0DC48"/>
<dbReference type="KEGG" id="spg:SpyM3_0763"/>
<dbReference type="HOGENOM" id="CLU_035304_1_1_9"/>
<dbReference type="UniPathway" id="UPA00219"/>
<dbReference type="Proteomes" id="UP000000564">
    <property type="component" value="Chromosome"/>
</dbReference>
<dbReference type="GO" id="GO:0005829">
    <property type="term" value="C:cytosol"/>
    <property type="evidence" value="ECO:0007669"/>
    <property type="project" value="TreeGrafter"/>
</dbReference>
<dbReference type="GO" id="GO:0071949">
    <property type="term" value="F:FAD binding"/>
    <property type="evidence" value="ECO:0007669"/>
    <property type="project" value="InterPro"/>
</dbReference>
<dbReference type="GO" id="GO:0008762">
    <property type="term" value="F:UDP-N-acetylmuramate dehydrogenase activity"/>
    <property type="evidence" value="ECO:0007669"/>
    <property type="project" value="UniProtKB-UniRule"/>
</dbReference>
<dbReference type="GO" id="GO:0051301">
    <property type="term" value="P:cell division"/>
    <property type="evidence" value="ECO:0007669"/>
    <property type="project" value="UniProtKB-KW"/>
</dbReference>
<dbReference type="GO" id="GO:0071555">
    <property type="term" value="P:cell wall organization"/>
    <property type="evidence" value="ECO:0007669"/>
    <property type="project" value="UniProtKB-KW"/>
</dbReference>
<dbReference type="GO" id="GO:0009252">
    <property type="term" value="P:peptidoglycan biosynthetic process"/>
    <property type="evidence" value="ECO:0007669"/>
    <property type="project" value="UniProtKB-UniRule"/>
</dbReference>
<dbReference type="GO" id="GO:0008360">
    <property type="term" value="P:regulation of cell shape"/>
    <property type="evidence" value="ECO:0007669"/>
    <property type="project" value="UniProtKB-KW"/>
</dbReference>
<dbReference type="Gene3D" id="3.30.465.10">
    <property type="match status" value="1"/>
</dbReference>
<dbReference type="Gene3D" id="3.90.78.10">
    <property type="entry name" value="UDP-N-acetylenolpyruvoylglucosamine reductase, C-terminal domain"/>
    <property type="match status" value="1"/>
</dbReference>
<dbReference type="Gene3D" id="3.30.43.10">
    <property type="entry name" value="Uridine Diphospho-n-acetylenolpyruvylglucosamine Reductase, domain 2"/>
    <property type="match status" value="1"/>
</dbReference>
<dbReference type="HAMAP" id="MF_00037">
    <property type="entry name" value="MurB"/>
    <property type="match status" value="1"/>
</dbReference>
<dbReference type="InterPro" id="IPR016166">
    <property type="entry name" value="FAD-bd_PCMH"/>
</dbReference>
<dbReference type="InterPro" id="IPR036318">
    <property type="entry name" value="FAD-bd_PCMH-like_sf"/>
</dbReference>
<dbReference type="InterPro" id="IPR016167">
    <property type="entry name" value="FAD-bd_PCMH_sub1"/>
</dbReference>
<dbReference type="InterPro" id="IPR016169">
    <property type="entry name" value="FAD-bd_PCMH_sub2"/>
</dbReference>
<dbReference type="InterPro" id="IPR003170">
    <property type="entry name" value="MurB"/>
</dbReference>
<dbReference type="InterPro" id="IPR011601">
    <property type="entry name" value="MurB_C"/>
</dbReference>
<dbReference type="InterPro" id="IPR036635">
    <property type="entry name" value="MurB_C_sf"/>
</dbReference>
<dbReference type="InterPro" id="IPR006094">
    <property type="entry name" value="Oxid_FAD_bind_N"/>
</dbReference>
<dbReference type="NCBIfam" id="TIGR00179">
    <property type="entry name" value="murB"/>
    <property type="match status" value="1"/>
</dbReference>
<dbReference type="NCBIfam" id="NF010480">
    <property type="entry name" value="PRK13905.1"/>
    <property type="match status" value="1"/>
</dbReference>
<dbReference type="PANTHER" id="PTHR21071">
    <property type="entry name" value="UDP-N-ACETYLENOLPYRUVOYLGLUCOSAMINE REDUCTASE"/>
    <property type="match status" value="1"/>
</dbReference>
<dbReference type="PANTHER" id="PTHR21071:SF4">
    <property type="entry name" value="UDP-N-ACETYLENOLPYRUVOYLGLUCOSAMINE REDUCTASE"/>
    <property type="match status" value="1"/>
</dbReference>
<dbReference type="Pfam" id="PF01565">
    <property type="entry name" value="FAD_binding_4"/>
    <property type="match status" value="1"/>
</dbReference>
<dbReference type="Pfam" id="PF02873">
    <property type="entry name" value="MurB_C"/>
    <property type="match status" value="1"/>
</dbReference>
<dbReference type="SUPFAM" id="SSF56176">
    <property type="entry name" value="FAD-binding/transporter-associated domain-like"/>
    <property type="match status" value="1"/>
</dbReference>
<dbReference type="SUPFAM" id="SSF56194">
    <property type="entry name" value="Uridine diphospho-N-Acetylenolpyruvylglucosamine reductase, MurB, C-terminal domain"/>
    <property type="match status" value="1"/>
</dbReference>
<dbReference type="PROSITE" id="PS51387">
    <property type="entry name" value="FAD_PCMH"/>
    <property type="match status" value="1"/>
</dbReference>
<proteinExistence type="inferred from homology"/>
<organism>
    <name type="scientific">Streptococcus pyogenes serotype M3 (strain ATCC BAA-595 / MGAS315)</name>
    <dbReference type="NCBI Taxonomy" id="198466"/>
    <lineage>
        <taxon>Bacteria</taxon>
        <taxon>Bacillati</taxon>
        <taxon>Bacillota</taxon>
        <taxon>Bacilli</taxon>
        <taxon>Lactobacillales</taxon>
        <taxon>Streptococcaceae</taxon>
        <taxon>Streptococcus</taxon>
    </lineage>
</organism>